<comment type="catalytic activity">
    <reaction evidence="1">
        <text>tRNA(Gly) + glycine + ATP = glycyl-tRNA(Gly) + AMP + diphosphate</text>
        <dbReference type="Rhea" id="RHEA:16013"/>
        <dbReference type="Rhea" id="RHEA-COMP:9664"/>
        <dbReference type="Rhea" id="RHEA-COMP:9683"/>
        <dbReference type="ChEBI" id="CHEBI:30616"/>
        <dbReference type="ChEBI" id="CHEBI:33019"/>
        <dbReference type="ChEBI" id="CHEBI:57305"/>
        <dbReference type="ChEBI" id="CHEBI:78442"/>
        <dbReference type="ChEBI" id="CHEBI:78522"/>
        <dbReference type="ChEBI" id="CHEBI:456215"/>
        <dbReference type="EC" id="6.1.1.14"/>
    </reaction>
</comment>
<comment type="subunit">
    <text evidence="1">Tetramer of two alpha and two beta subunits.</text>
</comment>
<comment type="subcellular location">
    <subcellularLocation>
        <location evidence="1">Cytoplasm</location>
    </subcellularLocation>
</comment>
<comment type="similarity">
    <text evidence="1">Belongs to the class-II aminoacyl-tRNA synthetase family.</text>
</comment>
<sequence length="290" mass="33425">MYFQDIISNLNNFWSEKGCLLLQPYDLEKGAGTMSPHSFLRAIGPEPWAVAYPEPCRRPTDGRYGDNPNRAQHYFQYQVLIKPSLDGIQEIYLSSLEALGISAKEHDIRFVEDNWESPTLGAWGVGWEVWLDGMEVTQFTYFQQCGGLDCKPVSIEITYGLERLAMYLQNVESIWDLSWNKKTKYGDIWLPFEKGQCKYNFEESNSENLRKLFEIYEEEAHQLIAKKLPAPCLDYVLKCSHTFNLLEARGVISVTERTKIIARIRSLARKVAEAWLEERGTLGFPLCAEN</sequence>
<organism>
    <name type="scientific">Prochlorococcus marinus (strain NATL1A)</name>
    <dbReference type="NCBI Taxonomy" id="167555"/>
    <lineage>
        <taxon>Bacteria</taxon>
        <taxon>Bacillati</taxon>
        <taxon>Cyanobacteriota</taxon>
        <taxon>Cyanophyceae</taxon>
        <taxon>Synechococcales</taxon>
        <taxon>Prochlorococcaceae</taxon>
        <taxon>Prochlorococcus</taxon>
    </lineage>
</organism>
<gene>
    <name evidence="1" type="primary">glyQ</name>
    <name type="ordered locus">NATL1_16221</name>
</gene>
<name>SYGA_PROM1</name>
<accession>A2C3W9</accession>
<evidence type="ECO:0000255" key="1">
    <source>
        <dbReference type="HAMAP-Rule" id="MF_00254"/>
    </source>
</evidence>
<feature type="chain" id="PRO_1000047460" description="Glycine--tRNA ligase alpha subunit">
    <location>
        <begin position="1"/>
        <end position="290"/>
    </location>
</feature>
<reference key="1">
    <citation type="journal article" date="2007" name="PLoS Genet.">
        <title>Patterns and implications of gene gain and loss in the evolution of Prochlorococcus.</title>
        <authorList>
            <person name="Kettler G.C."/>
            <person name="Martiny A.C."/>
            <person name="Huang K."/>
            <person name="Zucker J."/>
            <person name="Coleman M.L."/>
            <person name="Rodrigue S."/>
            <person name="Chen F."/>
            <person name="Lapidus A."/>
            <person name="Ferriera S."/>
            <person name="Johnson J."/>
            <person name="Steglich C."/>
            <person name="Church G.M."/>
            <person name="Richardson P."/>
            <person name="Chisholm S.W."/>
        </authorList>
    </citation>
    <scope>NUCLEOTIDE SEQUENCE [LARGE SCALE GENOMIC DNA]</scope>
    <source>
        <strain>NATL1A</strain>
    </source>
</reference>
<protein>
    <recommendedName>
        <fullName evidence="1">Glycine--tRNA ligase alpha subunit</fullName>
        <ecNumber evidence="1">6.1.1.14</ecNumber>
    </recommendedName>
    <alternativeName>
        <fullName evidence="1">Glycyl-tRNA synthetase alpha subunit</fullName>
        <shortName evidence="1">GlyRS</shortName>
    </alternativeName>
</protein>
<proteinExistence type="inferred from homology"/>
<dbReference type="EC" id="6.1.1.14" evidence="1"/>
<dbReference type="EMBL" id="CP000553">
    <property type="protein sequence ID" value="ABM76179.1"/>
    <property type="molecule type" value="Genomic_DNA"/>
</dbReference>
<dbReference type="RefSeq" id="WP_011824188.1">
    <property type="nucleotide sequence ID" value="NC_008819.1"/>
</dbReference>
<dbReference type="SMR" id="A2C3W9"/>
<dbReference type="KEGG" id="pme:NATL1_16221"/>
<dbReference type="eggNOG" id="COG0752">
    <property type="taxonomic scope" value="Bacteria"/>
</dbReference>
<dbReference type="HOGENOM" id="CLU_057066_1_0_3"/>
<dbReference type="Proteomes" id="UP000002592">
    <property type="component" value="Chromosome"/>
</dbReference>
<dbReference type="GO" id="GO:0005829">
    <property type="term" value="C:cytosol"/>
    <property type="evidence" value="ECO:0007669"/>
    <property type="project" value="TreeGrafter"/>
</dbReference>
<dbReference type="GO" id="GO:0005524">
    <property type="term" value="F:ATP binding"/>
    <property type="evidence" value="ECO:0007669"/>
    <property type="project" value="UniProtKB-UniRule"/>
</dbReference>
<dbReference type="GO" id="GO:0004820">
    <property type="term" value="F:glycine-tRNA ligase activity"/>
    <property type="evidence" value="ECO:0007669"/>
    <property type="project" value="UniProtKB-UniRule"/>
</dbReference>
<dbReference type="GO" id="GO:0006426">
    <property type="term" value="P:glycyl-tRNA aminoacylation"/>
    <property type="evidence" value="ECO:0007669"/>
    <property type="project" value="UniProtKB-UniRule"/>
</dbReference>
<dbReference type="CDD" id="cd00733">
    <property type="entry name" value="GlyRS_alpha_core"/>
    <property type="match status" value="1"/>
</dbReference>
<dbReference type="FunFam" id="3.30.930.10:FF:000006">
    <property type="entry name" value="Glycine--tRNA ligase alpha subunit"/>
    <property type="match status" value="1"/>
</dbReference>
<dbReference type="Gene3D" id="3.30.930.10">
    <property type="entry name" value="Bira Bifunctional Protein, Domain 2"/>
    <property type="match status" value="1"/>
</dbReference>
<dbReference type="Gene3D" id="1.20.58.180">
    <property type="entry name" value="Class II aaRS and biotin synthetases, domain 2"/>
    <property type="match status" value="1"/>
</dbReference>
<dbReference type="HAMAP" id="MF_00254">
    <property type="entry name" value="Gly_tRNA_synth_alpha"/>
    <property type="match status" value="1"/>
</dbReference>
<dbReference type="InterPro" id="IPR045864">
    <property type="entry name" value="aa-tRNA-synth_II/BPL/LPL"/>
</dbReference>
<dbReference type="InterPro" id="IPR006194">
    <property type="entry name" value="Gly-tRNA-synth_heterodimer"/>
</dbReference>
<dbReference type="InterPro" id="IPR002310">
    <property type="entry name" value="Gly-tRNA_ligase_asu"/>
</dbReference>
<dbReference type="NCBIfam" id="TIGR00388">
    <property type="entry name" value="glyQ"/>
    <property type="match status" value="1"/>
</dbReference>
<dbReference type="NCBIfam" id="NF006827">
    <property type="entry name" value="PRK09348.1"/>
    <property type="match status" value="1"/>
</dbReference>
<dbReference type="PANTHER" id="PTHR30075:SF2">
    <property type="entry name" value="GLYCINE--TRNA LIGASE, CHLOROPLASTIC_MITOCHONDRIAL 2"/>
    <property type="match status" value="1"/>
</dbReference>
<dbReference type="PANTHER" id="PTHR30075">
    <property type="entry name" value="GLYCYL-TRNA SYNTHETASE"/>
    <property type="match status" value="1"/>
</dbReference>
<dbReference type="Pfam" id="PF02091">
    <property type="entry name" value="tRNA-synt_2e"/>
    <property type="match status" value="1"/>
</dbReference>
<dbReference type="PRINTS" id="PR01044">
    <property type="entry name" value="TRNASYNTHGA"/>
</dbReference>
<dbReference type="SUPFAM" id="SSF55681">
    <property type="entry name" value="Class II aaRS and biotin synthetases"/>
    <property type="match status" value="1"/>
</dbReference>
<dbReference type="PROSITE" id="PS50861">
    <property type="entry name" value="AA_TRNA_LIGASE_II_GLYAB"/>
    <property type="match status" value="1"/>
</dbReference>
<keyword id="KW-0030">Aminoacyl-tRNA synthetase</keyword>
<keyword id="KW-0067">ATP-binding</keyword>
<keyword id="KW-0963">Cytoplasm</keyword>
<keyword id="KW-0436">Ligase</keyword>
<keyword id="KW-0547">Nucleotide-binding</keyword>
<keyword id="KW-0648">Protein biosynthesis</keyword>